<feature type="chain" id="PRO_1000048456" description="Isopentenyl-diphosphate delta-isomerase">
    <location>
        <begin position="1"/>
        <end position="342"/>
    </location>
</feature>
<feature type="binding site" evidence="1">
    <location>
        <begin position="11"/>
        <end position="12"/>
    </location>
    <ligand>
        <name>substrate</name>
    </ligand>
</feature>
<feature type="binding site" evidence="1">
    <location>
        <position position="68"/>
    </location>
    <ligand>
        <name>FMN</name>
        <dbReference type="ChEBI" id="CHEBI:58210"/>
    </ligand>
</feature>
<feature type="binding site" evidence="1">
    <location>
        <begin position="69"/>
        <end position="71"/>
    </location>
    <ligand>
        <name>FMN</name>
        <dbReference type="ChEBI" id="CHEBI:58210"/>
    </ligand>
</feature>
<feature type="binding site" evidence="1">
    <location>
        <begin position="99"/>
        <end position="101"/>
    </location>
    <ligand>
        <name>substrate</name>
    </ligand>
</feature>
<feature type="binding site" evidence="1">
    <location>
        <position position="99"/>
    </location>
    <ligand>
        <name>FMN</name>
        <dbReference type="ChEBI" id="CHEBI:58210"/>
    </ligand>
</feature>
<feature type="binding site" evidence="1">
    <location>
        <position position="127"/>
    </location>
    <ligand>
        <name>FMN</name>
        <dbReference type="ChEBI" id="CHEBI:58210"/>
    </ligand>
</feature>
<feature type="binding site" evidence="1">
    <location>
        <position position="162"/>
    </location>
    <ligand>
        <name>substrate</name>
    </ligand>
</feature>
<feature type="binding site" evidence="1">
    <location>
        <position position="163"/>
    </location>
    <ligand>
        <name>Mg(2+)</name>
        <dbReference type="ChEBI" id="CHEBI:18420"/>
    </ligand>
</feature>
<feature type="binding site" evidence="1">
    <location>
        <position position="194"/>
    </location>
    <ligand>
        <name>FMN</name>
        <dbReference type="ChEBI" id="CHEBI:58210"/>
    </ligand>
</feature>
<feature type="binding site" evidence="1">
    <location>
        <position position="224"/>
    </location>
    <ligand>
        <name>FMN</name>
        <dbReference type="ChEBI" id="CHEBI:58210"/>
    </ligand>
</feature>
<feature type="binding site" evidence="1">
    <location>
        <begin position="274"/>
        <end position="276"/>
    </location>
    <ligand>
        <name>FMN</name>
        <dbReference type="ChEBI" id="CHEBI:58210"/>
    </ligand>
</feature>
<feature type="binding site" evidence="1">
    <location>
        <begin position="295"/>
        <end position="296"/>
    </location>
    <ligand>
        <name>FMN</name>
        <dbReference type="ChEBI" id="CHEBI:58210"/>
    </ligand>
</feature>
<reference key="1">
    <citation type="submission" date="2007-09" db="EMBL/GenBank/DDBJ databases">
        <title>Complete genome sequence of Rickettsia rickettsii.</title>
        <authorList>
            <person name="Madan A."/>
            <person name="Fahey J."/>
            <person name="Helton E."/>
            <person name="Ketteman M."/>
            <person name="Madan A."/>
            <person name="Rodrigues S."/>
            <person name="Sanchez A."/>
            <person name="Dasch G."/>
            <person name="Eremeeva M."/>
        </authorList>
    </citation>
    <scope>NUCLEOTIDE SEQUENCE [LARGE SCALE GENOMIC DNA]</scope>
    <source>
        <strain>Sheila Smith</strain>
    </source>
</reference>
<name>IDI2_RICRS</name>
<gene>
    <name evidence="1" type="primary">fni</name>
    <name type="ordered locus">A1G_04195</name>
</gene>
<protein>
    <recommendedName>
        <fullName evidence="1">Isopentenyl-diphosphate delta-isomerase</fullName>
        <shortName evidence="1">IPP isomerase</shortName>
        <ecNumber evidence="1">5.3.3.2</ecNumber>
    </recommendedName>
    <alternativeName>
        <fullName evidence="1">Isopentenyl diphosphate:dimethylallyl diphosphate isomerase</fullName>
    </alternativeName>
    <alternativeName>
        <fullName evidence="1">Isopentenyl pyrophosphate isomerase</fullName>
    </alternativeName>
    <alternativeName>
        <fullName evidence="1">Type 2 isopentenyl diphosphate isomerase</fullName>
        <shortName evidence="1">IDI-2</shortName>
    </alternativeName>
</protein>
<dbReference type="EC" id="5.3.3.2" evidence="1"/>
<dbReference type="EMBL" id="CP000848">
    <property type="protein sequence ID" value="ABV76349.1"/>
    <property type="molecule type" value="Genomic_DNA"/>
</dbReference>
<dbReference type="RefSeq" id="WP_012150923.1">
    <property type="nucleotide sequence ID" value="NZ_CP121767.1"/>
</dbReference>
<dbReference type="SMR" id="A8GSH4"/>
<dbReference type="GeneID" id="79937467"/>
<dbReference type="KEGG" id="rri:A1G_04195"/>
<dbReference type="HOGENOM" id="CLU_065515_1_0_5"/>
<dbReference type="Proteomes" id="UP000006832">
    <property type="component" value="Chromosome"/>
</dbReference>
<dbReference type="GO" id="GO:0005737">
    <property type="term" value="C:cytoplasm"/>
    <property type="evidence" value="ECO:0007669"/>
    <property type="project" value="UniProtKB-SubCell"/>
</dbReference>
<dbReference type="GO" id="GO:0010181">
    <property type="term" value="F:FMN binding"/>
    <property type="evidence" value="ECO:0007669"/>
    <property type="project" value="UniProtKB-UniRule"/>
</dbReference>
<dbReference type="GO" id="GO:0004452">
    <property type="term" value="F:isopentenyl-diphosphate delta-isomerase activity"/>
    <property type="evidence" value="ECO:0007669"/>
    <property type="project" value="UniProtKB-UniRule"/>
</dbReference>
<dbReference type="GO" id="GO:0000287">
    <property type="term" value="F:magnesium ion binding"/>
    <property type="evidence" value="ECO:0007669"/>
    <property type="project" value="UniProtKB-UniRule"/>
</dbReference>
<dbReference type="GO" id="GO:0070402">
    <property type="term" value="F:NADPH binding"/>
    <property type="evidence" value="ECO:0007669"/>
    <property type="project" value="UniProtKB-UniRule"/>
</dbReference>
<dbReference type="GO" id="GO:0016491">
    <property type="term" value="F:oxidoreductase activity"/>
    <property type="evidence" value="ECO:0007669"/>
    <property type="project" value="InterPro"/>
</dbReference>
<dbReference type="GO" id="GO:0008299">
    <property type="term" value="P:isoprenoid biosynthetic process"/>
    <property type="evidence" value="ECO:0007669"/>
    <property type="project" value="UniProtKB-UniRule"/>
</dbReference>
<dbReference type="CDD" id="cd02811">
    <property type="entry name" value="IDI-2_FMN"/>
    <property type="match status" value="1"/>
</dbReference>
<dbReference type="Gene3D" id="3.20.20.70">
    <property type="entry name" value="Aldolase class I"/>
    <property type="match status" value="1"/>
</dbReference>
<dbReference type="HAMAP" id="MF_00354">
    <property type="entry name" value="Idi_2"/>
    <property type="match status" value="1"/>
</dbReference>
<dbReference type="InterPro" id="IPR013785">
    <property type="entry name" value="Aldolase_TIM"/>
</dbReference>
<dbReference type="InterPro" id="IPR000262">
    <property type="entry name" value="FMN-dep_DH"/>
</dbReference>
<dbReference type="InterPro" id="IPR011179">
    <property type="entry name" value="IPdP_isomerase"/>
</dbReference>
<dbReference type="NCBIfam" id="TIGR02151">
    <property type="entry name" value="IPP_isom_2"/>
    <property type="match status" value="1"/>
</dbReference>
<dbReference type="PANTHER" id="PTHR43665">
    <property type="entry name" value="ISOPENTENYL-DIPHOSPHATE DELTA-ISOMERASE"/>
    <property type="match status" value="1"/>
</dbReference>
<dbReference type="PANTHER" id="PTHR43665:SF1">
    <property type="entry name" value="ISOPENTENYL-DIPHOSPHATE DELTA-ISOMERASE"/>
    <property type="match status" value="1"/>
</dbReference>
<dbReference type="Pfam" id="PF01070">
    <property type="entry name" value="FMN_dh"/>
    <property type="match status" value="2"/>
</dbReference>
<dbReference type="PIRSF" id="PIRSF003314">
    <property type="entry name" value="IPP_isomerase"/>
    <property type="match status" value="1"/>
</dbReference>
<dbReference type="SUPFAM" id="SSF51395">
    <property type="entry name" value="FMN-linked oxidoreductases"/>
    <property type="match status" value="1"/>
</dbReference>
<comment type="function">
    <text evidence="1">Involved in the biosynthesis of isoprenoids. Catalyzes the 1,3-allylic rearrangement of the homoallylic substrate isopentenyl (IPP) to its allylic isomer, dimethylallyl diphosphate (DMAPP).</text>
</comment>
<comment type="catalytic activity">
    <reaction evidence="1">
        <text>isopentenyl diphosphate = dimethylallyl diphosphate</text>
        <dbReference type="Rhea" id="RHEA:23284"/>
        <dbReference type="ChEBI" id="CHEBI:57623"/>
        <dbReference type="ChEBI" id="CHEBI:128769"/>
        <dbReference type="EC" id="5.3.3.2"/>
    </reaction>
</comment>
<comment type="cofactor">
    <cofactor evidence="1">
        <name>FMN</name>
        <dbReference type="ChEBI" id="CHEBI:58210"/>
    </cofactor>
</comment>
<comment type="cofactor">
    <cofactor evidence="1">
        <name>NADPH</name>
        <dbReference type="ChEBI" id="CHEBI:57783"/>
    </cofactor>
</comment>
<comment type="cofactor">
    <cofactor evidence="1">
        <name>Mg(2+)</name>
        <dbReference type="ChEBI" id="CHEBI:18420"/>
    </cofactor>
</comment>
<comment type="subunit">
    <text evidence="1">Homooctamer. Dimer of tetramers.</text>
</comment>
<comment type="subcellular location">
    <subcellularLocation>
        <location evidence="1">Cytoplasm</location>
    </subcellularLocation>
</comment>
<comment type="similarity">
    <text evidence="1">Belongs to the IPP isomerase type 2 family.</text>
</comment>
<keyword id="KW-0963">Cytoplasm</keyword>
<keyword id="KW-0285">Flavoprotein</keyword>
<keyword id="KW-0288">FMN</keyword>
<keyword id="KW-0413">Isomerase</keyword>
<keyword id="KW-0414">Isoprene biosynthesis</keyword>
<keyword id="KW-0460">Magnesium</keyword>
<keyword id="KW-0479">Metal-binding</keyword>
<keyword id="KW-0521">NADP</keyword>
<organism>
    <name type="scientific">Rickettsia rickettsii (strain Sheila Smith)</name>
    <dbReference type="NCBI Taxonomy" id="392021"/>
    <lineage>
        <taxon>Bacteria</taxon>
        <taxon>Pseudomonadati</taxon>
        <taxon>Pseudomonadota</taxon>
        <taxon>Alphaproteobacteria</taxon>
        <taxon>Rickettsiales</taxon>
        <taxon>Rickettsiaceae</taxon>
        <taxon>Rickettsieae</taxon>
        <taxon>Rickettsia</taxon>
        <taxon>spotted fever group</taxon>
    </lineage>
</organism>
<accession>A8GSH4</accession>
<proteinExistence type="inferred from homology"/>
<evidence type="ECO:0000255" key="1">
    <source>
        <dbReference type="HAMAP-Rule" id="MF_00354"/>
    </source>
</evidence>
<sequence length="342" mass="37399">MLKDQNLDIERKQDHIEINLTQNVESTLKSGFESIHFIHNALPELNYDSINTTTTFLGKSLQAPILISSMTGGTTRARDINYRLAQVAQKAGIAMGLGSMRVLLTEPDTIKTFAVRHIAPDIPLLANIGAVQLNYGVTPKECQYLVDAIKADALILHLNVLQELTQPEGNRNWEKLLPKIREVVHYLSIPVIVKEVGYGLSKKVAESLIDAGVKVLDIAGSGGTSWSQVEAYRATNSLQNRIASSFINWGIPTLDSLKMVREVSKDIPIITSGGLKSGIDGAKAIRIGANIFGLAGQFLKAADTSESLLFEEIQLIIEQLKITMLCTGSRTLKDLAKAEIRL</sequence>